<organism>
    <name type="scientific">Mycolicibacterium vanbaalenii (strain DSM 7251 / JCM 13017 / BCRC 16820 / KCTC 9966 / NRRL B-24157 / PYR-1)</name>
    <name type="common">Mycobacterium vanbaalenii</name>
    <dbReference type="NCBI Taxonomy" id="350058"/>
    <lineage>
        <taxon>Bacteria</taxon>
        <taxon>Bacillati</taxon>
        <taxon>Actinomycetota</taxon>
        <taxon>Actinomycetes</taxon>
        <taxon>Mycobacteriales</taxon>
        <taxon>Mycobacteriaceae</taxon>
        <taxon>Mycolicibacterium</taxon>
    </lineage>
</organism>
<evidence type="ECO:0000255" key="1">
    <source>
        <dbReference type="HAMAP-Rule" id="MF_01445"/>
    </source>
</evidence>
<name>TSAD_MYCVP</name>
<reference key="1">
    <citation type="submission" date="2006-12" db="EMBL/GenBank/DDBJ databases">
        <title>Complete sequence of Mycobacterium vanbaalenii PYR-1.</title>
        <authorList>
            <consortium name="US DOE Joint Genome Institute"/>
            <person name="Copeland A."/>
            <person name="Lucas S."/>
            <person name="Lapidus A."/>
            <person name="Barry K."/>
            <person name="Detter J.C."/>
            <person name="Glavina del Rio T."/>
            <person name="Hammon N."/>
            <person name="Israni S."/>
            <person name="Dalin E."/>
            <person name="Tice H."/>
            <person name="Pitluck S."/>
            <person name="Singan V."/>
            <person name="Schmutz J."/>
            <person name="Larimer F."/>
            <person name="Land M."/>
            <person name="Hauser L."/>
            <person name="Kyrpides N."/>
            <person name="Anderson I.J."/>
            <person name="Miller C."/>
            <person name="Richardson P."/>
        </authorList>
    </citation>
    <scope>NUCLEOTIDE SEQUENCE [LARGE SCALE GENOMIC DNA]</scope>
    <source>
        <strain>DSM 7251 / JCM 13017 / BCRC 16820 / KCTC 9966 / NRRL B-24157 / PYR-1</strain>
    </source>
</reference>
<comment type="function">
    <text evidence="1">Required for the formation of a threonylcarbamoyl group on adenosine at position 37 (t(6)A37) in tRNAs that read codons beginning with adenine. Is involved in the transfer of the threonylcarbamoyl moiety of threonylcarbamoyl-AMP (TC-AMP) to the N6 group of A37, together with TsaE and TsaB. TsaD likely plays a direct catalytic role in this reaction.</text>
</comment>
<comment type="catalytic activity">
    <reaction evidence="1">
        <text>L-threonylcarbamoyladenylate + adenosine(37) in tRNA = N(6)-L-threonylcarbamoyladenosine(37) in tRNA + AMP + H(+)</text>
        <dbReference type="Rhea" id="RHEA:37059"/>
        <dbReference type="Rhea" id="RHEA-COMP:10162"/>
        <dbReference type="Rhea" id="RHEA-COMP:10163"/>
        <dbReference type="ChEBI" id="CHEBI:15378"/>
        <dbReference type="ChEBI" id="CHEBI:73682"/>
        <dbReference type="ChEBI" id="CHEBI:74411"/>
        <dbReference type="ChEBI" id="CHEBI:74418"/>
        <dbReference type="ChEBI" id="CHEBI:456215"/>
        <dbReference type="EC" id="2.3.1.234"/>
    </reaction>
</comment>
<comment type="cofactor">
    <cofactor evidence="1">
        <name>Fe(2+)</name>
        <dbReference type="ChEBI" id="CHEBI:29033"/>
    </cofactor>
    <text evidence="1">Binds 1 Fe(2+) ion per subunit.</text>
</comment>
<comment type="subcellular location">
    <subcellularLocation>
        <location evidence="1">Cytoplasm</location>
    </subcellularLocation>
</comment>
<comment type="similarity">
    <text evidence="1">Belongs to the KAE1 / TsaD family.</text>
</comment>
<feature type="chain" id="PRO_0000303437" description="tRNA N6-adenosine threonylcarbamoyltransferase">
    <location>
        <begin position="1"/>
        <end position="340"/>
    </location>
</feature>
<feature type="binding site" evidence="1">
    <location>
        <position position="113"/>
    </location>
    <ligand>
        <name>Fe cation</name>
        <dbReference type="ChEBI" id="CHEBI:24875"/>
    </ligand>
</feature>
<feature type="binding site" evidence="1">
    <location>
        <position position="117"/>
    </location>
    <ligand>
        <name>Fe cation</name>
        <dbReference type="ChEBI" id="CHEBI:24875"/>
    </ligand>
</feature>
<feature type="binding site" evidence="1">
    <location>
        <begin position="135"/>
        <end position="139"/>
    </location>
    <ligand>
        <name>substrate</name>
    </ligand>
</feature>
<feature type="binding site" evidence="1">
    <location>
        <position position="169"/>
    </location>
    <ligand>
        <name>substrate</name>
    </ligand>
</feature>
<feature type="binding site" evidence="1">
    <location>
        <position position="182"/>
    </location>
    <ligand>
        <name>substrate</name>
    </ligand>
</feature>
<feature type="binding site" evidence="1">
    <location>
        <position position="186"/>
    </location>
    <ligand>
        <name>substrate</name>
    </ligand>
</feature>
<feature type="binding site" evidence="1">
    <location>
        <position position="274"/>
    </location>
    <ligand>
        <name>substrate</name>
    </ligand>
</feature>
<feature type="binding site" evidence="1">
    <location>
        <position position="302"/>
    </location>
    <ligand>
        <name>Fe cation</name>
        <dbReference type="ChEBI" id="CHEBI:24875"/>
    </ligand>
</feature>
<gene>
    <name evidence="1" type="primary">tsaD</name>
    <name type="synonym">gcp</name>
    <name type="ordered locus">Mvan_1489</name>
</gene>
<accession>A1T571</accession>
<proteinExistence type="inferred from homology"/>
<keyword id="KW-0012">Acyltransferase</keyword>
<keyword id="KW-0963">Cytoplasm</keyword>
<keyword id="KW-0408">Iron</keyword>
<keyword id="KW-0479">Metal-binding</keyword>
<keyword id="KW-0808">Transferase</keyword>
<keyword id="KW-0819">tRNA processing</keyword>
<protein>
    <recommendedName>
        <fullName evidence="1">tRNA N6-adenosine threonylcarbamoyltransferase</fullName>
        <ecNumber evidence="1">2.3.1.234</ecNumber>
    </recommendedName>
    <alternativeName>
        <fullName evidence="1">N6-L-threonylcarbamoyladenine synthase</fullName>
        <shortName evidence="1">t(6)A synthase</shortName>
    </alternativeName>
    <alternativeName>
        <fullName evidence="1">t(6)A37 threonylcarbamoyladenosine biosynthesis protein TsaD</fullName>
    </alternativeName>
    <alternativeName>
        <fullName evidence="1">tRNA threonylcarbamoyladenosine biosynthesis protein TsaD</fullName>
    </alternativeName>
</protein>
<dbReference type="EC" id="2.3.1.234" evidence="1"/>
<dbReference type="EMBL" id="CP000511">
    <property type="protein sequence ID" value="ABM12321.1"/>
    <property type="molecule type" value="Genomic_DNA"/>
</dbReference>
<dbReference type="RefSeq" id="WP_011778747.1">
    <property type="nucleotide sequence ID" value="NC_008726.1"/>
</dbReference>
<dbReference type="SMR" id="A1T571"/>
<dbReference type="STRING" id="350058.Mvan_1489"/>
<dbReference type="KEGG" id="mva:Mvan_1489"/>
<dbReference type="eggNOG" id="COG0533">
    <property type="taxonomic scope" value="Bacteria"/>
</dbReference>
<dbReference type="HOGENOM" id="CLU_023208_0_2_11"/>
<dbReference type="Proteomes" id="UP000009159">
    <property type="component" value="Chromosome"/>
</dbReference>
<dbReference type="GO" id="GO:0005737">
    <property type="term" value="C:cytoplasm"/>
    <property type="evidence" value="ECO:0007669"/>
    <property type="project" value="UniProtKB-SubCell"/>
</dbReference>
<dbReference type="GO" id="GO:0005506">
    <property type="term" value="F:iron ion binding"/>
    <property type="evidence" value="ECO:0007669"/>
    <property type="project" value="UniProtKB-UniRule"/>
</dbReference>
<dbReference type="GO" id="GO:0061711">
    <property type="term" value="F:N(6)-L-threonylcarbamoyladenine synthase activity"/>
    <property type="evidence" value="ECO:0007669"/>
    <property type="project" value="UniProtKB-EC"/>
</dbReference>
<dbReference type="GO" id="GO:0002949">
    <property type="term" value="P:tRNA threonylcarbamoyladenosine modification"/>
    <property type="evidence" value="ECO:0007669"/>
    <property type="project" value="UniProtKB-UniRule"/>
</dbReference>
<dbReference type="CDD" id="cd24133">
    <property type="entry name" value="ASKHA_NBD_TsaD_bac"/>
    <property type="match status" value="1"/>
</dbReference>
<dbReference type="FunFam" id="3.30.420.40:FF:000012">
    <property type="entry name" value="tRNA N6-adenosine threonylcarbamoyltransferase"/>
    <property type="match status" value="1"/>
</dbReference>
<dbReference type="FunFam" id="3.30.420.40:FF:000040">
    <property type="entry name" value="tRNA N6-adenosine threonylcarbamoyltransferase"/>
    <property type="match status" value="1"/>
</dbReference>
<dbReference type="Gene3D" id="3.30.420.40">
    <property type="match status" value="2"/>
</dbReference>
<dbReference type="HAMAP" id="MF_01445">
    <property type="entry name" value="TsaD"/>
    <property type="match status" value="1"/>
</dbReference>
<dbReference type="InterPro" id="IPR043129">
    <property type="entry name" value="ATPase_NBD"/>
</dbReference>
<dbReference type="InterPro" id="IPR000905">
    <property type="entry name" value="Gcp-like_dom"/>
</dbReference>
<dbReference type="InterPro" id="IPR017861">
    <property type="entry name" value="KAE1/TsaD"/>
</dbReference>
<dbReference type="InterPro" id="IPR017860">
    <property type="entry name" value="Peptidase_M22_CS"/>
</dbReference>
<dbReference type="InterPro" id="IPR022450">
    <property type="entry name" value="TsaD"/>
</dbReference>
<dbReference type="NCBIfam" id="TIGR00329">
    <property type="entry name" value="gcp_kae1"/>
    <property type="match status" value="1"/>
</dbReference>
<dbReference type="NCBIfam" id="TIGR03723">
    <property type="entry name" value="T6A_TsaD_YgjD"/>
    <property type="match status" value="1"/>
</dbReference>
<dbReference type="PANTHER" id="PTHR11735">
    <property type="entry name" value="TRNA N6-ADENOSINE THREONYLCARBAMOYLTRANSFERASE"/>
    <property type="match status" value="1"/>
</dbReference>
<dbReference type="PANTHER" id="PTHR11735:SF6">
    <property type="entry name" value="TRNA N6-ADENOSINE THREONYLCARBAMOYLTRANSFERASE, MITOCHONDRIAL"/>
    <property type="match status" value="1"/>
</dbReference>
<dbReference type="Pfam" id="PF00814">
    <property type="entry name" value="TsaD"/>
    <property type="match status" value="1"/>
</dbReference>
<dbReference type="PRINTS" id="PR00789">
    <property type="entry name" value="OSIALOPTASE"/>
</dbReference>
<dbReference type="SUPFAM" id="SSF53067">
    <property type="entry name" value="Actin-like ATPase domain"/>
    <property type="match status" value="2"/>
</dbReference>
<dbReference type="PROSITE" id="PS01016">
    <property type="entry name" value="GLYCOPROTEASE"/>
    <property type="match status" value="1"/>
</dbReference>
<sequence>MIILAVESSCDETGVGIAELGDDGTVTLLADEVASSVDEHARFGGVVPEIASRAHLEALGPTMRRALATAGVSKPDVVAATIGPGLAGALLVGVAAAKAYSAAWQVPFYAVNHLGGHLAADVFDHGPLPESIGLLVSGGHTHLLHVRSLGEPIVELGSTVDDAAGEAYDKIARLLGLGYPGGRVLDELAREGDPAAITFPRGMTGPRDDPYAFSFSGLKTAVARYVESHPEASQADVAAGFQEAVADVLTAKAVRAAKDLGVSTLLIAGGVAANSRLRELAGQRCADAGMTLRIPRPRLCTDNGAMIASFAAHLIAAGARPSPLDAASDPGLPVVQGQVA</sequence>